<name>STXB6_HUMAN</name>
<accession>Q8NFX7</accession>
<accession>D3DS78</accession>
<accession>Q8N3H1</accession>
<accession>Q8N8D5</accession>
<accession>Q96GF3</accession>
<accession>Q9P008</accession>
<comment type="function">
    <text>Forms non-fusogenic complexes with SNAP25 and STX1A and may thereby modulate the formation of functional SNARE complexes and exocytosis.</text>
</comment>
<comment type="subunit">
    <text evidence="2">Part of a ternary complex containing SNAP25 and STX1A that can be dissociated by NAPA and NSF. Interacts with STX4A.</text>
</comment>
<comment type="subcellular location">
    <subcellularLocation>
        <location evidence="2">Cytoplasm</location>
    </subcellularLocation>
    <subcellularLocation>
        <location evidence="2">Membrane</location>
        <topology evidence="2">Peripheral membrane protein</topology>
    </subcellularLocation>
</comment>
<comment type="alternative products">
    <event type="alternative splicing"/>
    <isoform>
        <id>Q8NFX7-1</id>
        <name>1</name>
        <sequence type="displayed"/>
    </isoform>
    <isoform>
        <id>Q8NFX7-2</id>
        <name>2</name>
        <sequence type="described" ref="VSP_008073"/>
    </isoform>
    <isoform>
        <id>Q8NFX7-3</id>
        <name>3</name>
        <sequence type="described" ref="VSP_008071 VSP_008072"/>
    </isoform>
</comment>
<comment type="tissue specificity">
    <text evidence="2">Detected at low levels in brain, and at very low levels in heart, adrenal gland, testis, liver and kidney.</text>
</comment>
<comment type="miscellaneous">
    <molecule>Isoform 2</molecule>
    <text evidence="5">May be due to an intron retention.</text>
</comment>
<comment type="miscellaneous">
    <molecule>Isoform 3</molecule>
    <text evidence="5">May be due to an intron retention.</text>
</comment>
<comment type="sequence caution" evidence="5">
    <conflict type="erroneous initiation">
        <sequence resource="EMBL-CDS" id="AAM46624"/>
    </conflict>
</comment>
<organism>
    <name type="scientific">Homo sapiens</name>
    <name type="common">Human</name>
    <dbReference type="NCBI Taxonomy" id="9606"/>
    <lineage>
        <taxon>Eukaryota</taxon>
        <taxon>Metazoa</taxon>
        <taxon>Chordata</taxon>
        <taxon>Craniata</taxon>
        <taxon>Vertebrata</taxon>
        <taxon>Euteleostomi</taxon>
        <taxon>Mammalia</taxon>
        <taxon>Eutheria</taxon>
        <taxon>Euarchontoglires</taxon>
        <taxon>Primates</taxon>
        <taxon>Haplorrhini</taxon>
        <taxon>Catarrhini</taxon>
        <taxon>Hominidae</taxon>
        <taxon>Homo</taxon>
    </lineage>
</organism>
<gene>
    <name type="primary">STXBP6</name>
    <name type="ORF">HSPC156</name>
</gene>
<protein>
    <recommendedName>
        <fullName>Syntaxin-binding protein 6</fullName>
    </recommendedName>
    <alternativeName>
        <fullName>Amisyn</fullName>
    </alternativeName>
</protein>
<feature type="initiator methionine" description="Removed" evidence="6">
    <location>
        <position position="1"/>
    </location>
</feature>
<feature type="chain" id="PRO_0000206782" description="Syntaxin-binding protein 6">
    <location>
        <begin position="2"/>
        <end position="210"/>
    </location>
</feature>
<feature type="domain" description="v-SNARE coiled-coil homology" evidence="1">
    <location>
        <begin position="151"/>
        <end position="210"/>
    </location>
</feature>
<feature type="modified residue" description="N-acetylserine" evidence="6">
    <location>
        <position position="2"/>
    </location>
</feature>
<feature type="splice variant" id="VSP_008071" description="In isoform 3." evidence="3">
    <location>
        <begin position="1"/>
        <end position="102"/>
    </location>
</feature>
<feature type="splice variant" id="VSP_008072" description="In isoform 3." evidence="3">
    <original>LFENAFDQWVASTASEKCTFFQILHHTCQRYLTDRKPEFINCQSKIMG</original>
    <variation>MSACFLDTRRAAFLQCDLPSSYRILTLPESGHCGSAEPVSDAPALLLS</variation>
    <location>
        <begin position="103"/>
        <end position="150"/>
    </location>
</feature>
<feature type="splice variant" id="VSP_008073" description="In isoform 2." evidence="4">
    <original>LAMKHKC</original>
    <variation>VTFRGRK</variation>
    <location>
        <begin position="204"/>
        <end position="210"/>
    </location>
</feature>
<feature type="sequence conflict" description="In Ref. 3; BAC04911." evidence="5" ref="3">
    <original>S</original>
    <variation>P</variation>
    <location>
        <position position="117"/>
    </location>
</feature>
<feature type="sequence conflict" description="In Ref. 3; BAC04911." evidence="5" ref="3">
    <original>I</original>
    <variation>T</variation>
    <location>
        <position position="125"/>
    </location>
</feature>
<keyword id="KW-0007">Acetylation</keyword>
<keyword id="KW-0025">Alternative splicing</keyword>
<keyword id="KW-0175">Coiled coil</keyword>
<keyword id="KW-0963">Cytoplasm</keyword>
<keyword id="KW-0472">Membrane</keyword>
<keyword id="KW-1267">Proteomics identification</keyword>
<keyword id="KW-1185">Reference proteome</keyword>
<reference key="1">
    <citation type="journal article" date="2002" name="J. Biol. Chem.">
        <title>Amisyn, a novel syntaxin-binding protein that may regulate SNARE complex assembly.</title>
        <authorList>
            <person name="Scales S.J."/>
            <person name="Hesser B.A."/>
            <person name="Masuda E.S."/>
            <person name="Scheller R.H."/>
        </authorList>
    </citation>
    <scope>NUCLEOTIDE SEQUENCE [MRNA] (ISOFORM 1)</scope>
    <scope>TISSUE SPECIFICITY</scope>
    <scope>INTERACTION WITH STX1A; STX4A AND SNAP25</scope>
    <scope>SUBCELLULAR LOCATION</scope>
</reference>
<reference key="2">
    <citation type="journal article" date="2000" name="Genome Res.">
        <title>Cloning and functional analysis of cDNAs with open reading frames for 300 previously undefined genes expressed in CD34+ hematopoietic stem/progenitor cells.</title>
        <authorList>
            <person name="Zhang Q.-H."/>
            <person name="Ye M."/>
            <person name="Wu X.-Y."/>
            <person name="Ren S.-X."/>
            <person name="Zhao M."/>
            <person name="Zhao C.-J."/>
            <person name="Fu G."/>
            <person name="Shen Y."/>
            <person name="Fan H.-Y."/>
            <person name="Lu G."/>
            <person name="Zhong M."/>
            <person name="Xu X.-R."/>
            <person name="Han Z.-G."/>
            <person name="Zhang J.-W."/>
            <person name="Tao J."/>
            <person name="Huang Q.-H."/>
            <person name="Zhou J."/>
            <person name="Hu G.-X."/>
            <person name="Gu J."/>
            <person name="Chen S.-J."/>
            <person name="Chen Z."/>
        </authorList>
    </citation>
    <scope>NUCLEOTIDE SEQUENCE [LARGE SCALE MRNA] (ISOFORM 3)</scope>
    <source>
        <tissue>Umbilical cord blood</tissue>
    </source>
</reference>
<reference key="3">
    <citation type="journal article" date="2004" name="Nat. Genet.">
        <title>Complete sequencing and characterization of 21,243 full-length human cDNAs.</title>
        <authorList>
            <person name="Ota T."/>
            <person name="Suzuki Y."/>
            <person name="Nishikawa T."/>
            <person name="Otsuki T."/>
            <person name="Sugiyama T."/>
            <person name="Irie R."/>
            <person name="Wakamatsu A."/>
            <person name="Hayashi K."/>
            <person name="Sato H."/>
            <person name="Nagai K."/>
            <person name="Kimura K."/>
            <person name="Makita H."/>
            <person name="Sekine M."/>
            <person name="Obayashi M."/>
            <person name="Nishi T."/>
            <person name="Shibahara T."/>
            <person name="Tanaka T."/>
            <person name="Ishii S."/>
            <person name="Yamamoto J."/>
            <person name="Saito K."/>
            <person name="Kawai Y."/>
            <person name="Isono Y."/>
            <person name="Nakamura Y."/>
            <person name="Nagahari K."/>
            <person name="Murakami K."/>
            <person name="Yasuda T."/>
            <person name="Iwayanagi T."/>
            <person name="Wagatsuma M."/>
            <person name="Shiratori A."/>
            <person name="Sudo H."/>
            <person name="Hosoiri T."/>
            <person name="Kaku Y."/>
            <person name="Kodaira H."/>
            <person name="Kondo H."/>
            <person name="Sugawara M."/>
            <person name="Takahashi M."/>
            <person name="Kanda K."/>
            <person name="Yokoi T."/>
            <person name="Furuya T."/>
            <person name="Kikkawa E."/>
            <person name="Omura Y."/>
            <person name="Abe K."/>
            <person name="Kamihara K."/>
            <person name="Katsuta N."/>
            <person name="Sato K."/>
            <person name="Tanikawa M."/>
            <person name="Yamazaki M."/>
            <person name="Ninomiya K."/>
            <person name="Ishibashi T."/>
            <person name="Yamashita H."/>
            <person name="Murakawa K."/>
            <person name="Fujimori K."/>
            <person name="Tanai H."/>
            <person name="Kimata M."/>
            <person name="Watanabe M."/>
            <person name="Hiraoka S."/>
            <person name="Chiba Y."/>
            <person name="Ishida S."/>
            <person name="Ono Y."/>
            <person name="Takiguchi S."/>
            <person name="Watanabe S."/>
            <person name="Yosida M."/>
            <person name="Hotuta T."/>
            <person name="Kusano J."/>
            <person name="Kanehori K."/>
            <person name="Takahashi-Fujii A."/>
            <person name="Hara H."/>
            <person name="Tanase T.-O."/>
            <person name="Nomura Y."/>
            <person name="Togiya S."/>
            <person name="Komai F."/>
            <person name="Hara R."/>
            <person name="Takeuchi K."/>
            <person name="Arita M."/>
            <person name="Imose N."/>
            <person name="Musashino K."/>
            <person name="Yuuki H."/>
            <person name="Oshima A."/>
            <person name="Sasaki N."/>
            <person name="Aotsuka S."/>
            <person name="Yoshikawa Y."/>
            <person name="Matsunawa H."/>
            <person name="Ichihara T."/>
            <person name="Shiohata N."/>
            <person name="Sano S."/>
            <person name="Moriya S."/>
            <person name="Momiyama H."/>
            <person name="Satoh N."/>
            <person name="Takami S."/>
            <person name="Terashima Y."/>
            <person name="Suzuki O."/>
            <person name="Nakagawa S."/>
            <person name="Senoh A."/>
            <person name="Mizoguchi H."/>
            <person name="Goto Y."/>
            <person name="Shimizu F."/>
            <person name="Wakebe H."/>
            <person name="Hishigaki H."/>
            <person name="Watanabe T."/>
            <person name="Sugiyama A."/>
            <person name="Takemoto M."/>
            <person name="Kawakami B."/>
            <person name="Yamazaki M."/>
            <person name="Watanabe K."/>
            <person name="Kumagai A."/>
            <person name="Itakura S."/>
            <person name="Fukuzumi Y."/>
            <person name="Fujimori Y."/>
            <person name="Komiyama M."/>
            <person name="Tashiro H."/>
            <person name="Tanigami A."/>
            <person name="Fujiwara T."/>
            <person name="Ono T."/>
            <person name="Yamada K."/>
            <person name="Fujii Y."/>
            <person name="Ozaki K."/>
            <person name="Hirao M."/>
            <person name="Ohmori Y."/>
            <person name="Kawabata A."/>
            <person name="Hikiji T."/>
            <person name="Kobatake N."/>
            <person name="Inagaki H."/>
            <person name="Ikema Y."/>
            <person name="Okamoto S."/>
            <person name="Okitani R."/>
            <person name="Kawakami T."/>
            <person name="Noguchi S."/>
            <person name="Itoh T."/>
            <person name="Shigeta K."/>
            <person name="Senba T."/>
            <person name="Matsumura K."/>
            <person name="Nakajima Y."/>
            <person name="Mizuno T."/>
            <person name="Morinaga M."/>
            <person name="Sasaki M."/>
            <person name="Togashi T."/>
            <person name="Oyama M."/>
            <person name="Hata H."/>
            <person name="Watanabe M."/>
            <person name="Komatsu T."/>
            <person name="Mizushima-Sugano J."/>
            <person name="Satoh T."/>
            <person name="Shirai Y."/>
            <person name="Takahashi Y."/>
            <person name="Nakagawa K."/>
            <person name="Okumura K."/>
            <person name="Nagase T."/>
            <person name="Nomura N."/>
            <person name="Kikuchi H."/>
            <person name="Masuho Y."/>
            <person name="Yamashita R."/>
            <person name="Nakai K."/>
            <person name="Yada T."/>
            <person name="Nakamura Y."/>
            <person name="Ohara O."/>
            <person name="Isogai T."/>
            <person name="Sugano S."/>
        </authorList>
    </citation>
    <scope>NUCLEOTIDE SEQUENCE [LARGE SCALE MRNA] (ISOFORM 2)</scope>
    <source>
        <tissue>Small intestine</tissue>
    </source>
</reference>
<reference key="4">
    <citation type="journal article" date="2007" name="BMC Genomics">
        <title>The full-ORF clone resource of the German cDNA consortium.</title>
        <authorList>
            <person name="Bechtel S."/>
            <person name="Rosenfelder H."/>
            <person name="Duda A."/>
            <person name="Schmidt C.P."/>
            <person name="Ernst U."/>
            <person name="Wellenreuther R."/>
            <person name="Mehrle A."/>
            <person name="Schuster C."/>
            <person name="Bahr A."/>
            <person name="Bloecker H."/>
            <person name="Heubner D."/>
            <person name="Hoerlein A."/>
            <person name="Michel G."/>
            <person name="Wedler H."/>
            <person name="Koehrer K."/>
            <person name="Ottenwaelder B."/>
            <person name="Poustka A."/>
            <person name="Wiemann S."/>
            <person name="Schupp I."/>
        </authorList>
    </citation>
    <scope>NUCLEOTIDE SEQUENCE [LARGE SCALE MRNA] (ISOFORM 1)</scope>
    <source>
        <tissue>Amygdala</tissue>
    </source>
</reference>
<reference key="5">
    <citation type="journal article" date="2003" name="Nature">
        <title>The DNA sequence and analysis of human chromosome 14.</title>
        <authorList>
            <person name="Heilig R."/>
            <person name="Eckenberg R."/>
            <person name="Petit J.-L."/>
            <person name="Fonknechten N."/>
            <person name="Da Silva C."/>
            <person name="Cattolico L."/>
            <person name="Levy M."/>
            <person name="Barbe V."/>
            <person name="De Berardinis V."/>
            <person name="Ureta-Vidal A."/>
            <person name="Pelletier E."/>
            <person name="Vico V."/>
            <person name="Anthouard V."/>
            <person name="Rowen L."/>
            <person name="Madan A."/>
            <person name="Qin S."/>
            <person name="Sun H."/>
            <person name="Du H."/>
            <person name="Pepin K."/>
            <person name="Artiguenave F."/>
            <person name="Robert C."/>
            <person name="Cruaud C."/>
            <person name="Bruels T."/>
            <person name="Jaillon O."/>
            <person name="Friedlander L."/>
            <person name="Samson G."/>
            <person name="Brottier P."/>
            <person name="Cure S."/>
            <person name="Segurens B."/>
            <person name="Aniere F."/>
            <person name="Samain S."/>
            <person name="Crespeau H."/>
            <person name="Abbasi N."/>
            <person name="Aiach N."/>
            <person name="Boscus D."/>
            <person name="Dickhoff R."/>
            <person name="Dors M."/>
            <person name="Dubois I."/>
            <person name="Friedman C."/>
            <person name="Gouyvenoux M."/>
            <person name="James R."/>
            <person name="Madan A."/>
            <person name="Mairey-Estrada B."/>
            <person name="Mangenot S."/>
            <person name="Martins N."/>
            <person name="Menard M."/>
            <person name="Oztas S."/>
            <person name="Ratcliffe A."/>
            <person name="Shaffer T."/>
            <person name="Trask B."/>
            <person name="Vacherie B."/>
            <person name="Bellemere C."/>
            <person name="Belser C."/>
            <person name="Besnard-Gonnet M."/>
            <person name="Bartol-Mavel D."/>
            <person name="Boutard M."/>
            <person name="Briez-Silla S."/>
            <person name="Combette S."/>
            <person name="Dufosse-Laurent V."/>
            <person name="Ferron C."/>
            <person name="Lechaplais C."/>
            <person name="Louesse C."/>
            <person name="Muselet D."/>
            <person name="Magdelenat G."/>
            <person name="Pateau E."/>
            <person name="Petit E."/>
            <person name="Sirvain-Trukniewicz P."/>
            <person name="Trybou A."/>
            <person name="Vega-Czarny N."/>
            <person name="Bataille E."/>
            <person name="Bluet E."/>
            <person name="Bordelais I."/>
            <person name="Dubois M."/>
            <person name="Dumont C."/>
            <person name="Guerin T."/>
            <person name="Haffray S."/>
            <person name="Hammadi R."/>
            <person name="Muanga J."/>
            <person name="Pellouin V."/>
            <person name="Robert D."/>
            <person name="Wunderle E."/>
            <person name="Gauguet G."/>
            <person name="Roy A."/>
            <person name="Sainte-Marthe L."/>
            <person name="Verdier J."/>
            <person name="Verdier-Discala C."/>
            <person name="Hillier L.W."/>
            <person name="Fulton L."/>
            <person name="McPherson J."/>
            <person name="Matsuda F."/>
            <person name="Wilson R."/>
            <person name="Scarpelli C."/>
            <person name="Gyapay G."/>
            <person name="Wincker P."/>
            <person name="Saurin W."/>
            <person name="Quetier F."/>
            <person name="Waterston R."/>
            <person name="Hood L."/>
            <person name="Weissenbach J."/>
        </authorList>
    </citation>
    <scope>NUCLEOTIDE SEQUENCE [LARGE SCALE GENOMIC DNA]</scope>
</reference>
<reference key="6">
    <citation type="submission" date="2005-09" db="EMBL/GenBank/DDBJ databases">
        <authorList>
            <person name="Mural R.J."/>
            <person name="Istrail S."/>
            <person name="Sutton G.G."/>
            <person name="Florea L."/>
            <person name="Halpern A.L."/>
            <person name="Mobarry C.M."/>
            <person name="Lippert R."/>
            <person name="Walenz B."/>
            <person name="Shatkay H."/>
            <person name="Dew I."/>
            <person name="Miller J.R."/>
            <person name="Flanigan M.J."/>
            <person name="Edwards N.J."/>
            <person name="Bolanos R."/>
            <person name="Fasulo D."/>
            <person name="Halldorsson B.V."/>
            <person name="Hannenhalli S."/>
            <person name="Turner R."/>
            <person name="Yooseph S."/>
            <person name="Lu F."/>
            <person name="Nusskern D.R."/>
            <person name="Shue B.C."/>
            <person name="Zheng X.H."/>
            <person name="Zhong F."/>
            <person name="Delcher A.L."/>
            <person name="Huson D.H."/>
            <person name="Kravitz S.A."/>
            <person name="Mouchard L."/>
            <person name="Reinert K."/>
            <person name="Remington K.A."/>
            <person name="Clark A.G."/>
            <person name="Waterman M.S."/>
            <person name="Eichler E.E."/>
            <person name="Adams M.D."/>
            <person name="Hunkapiller M.W."/>
            <person name="Myers E.W."/>
            <person name="Venter J.C."/>
        </authorList>
    </citation>
    <scope>NUCLEOTIDE SEQUENCE [LARGE SCALE GENOMIC DNA]</scope>
</reference>
<reference key="7">
    <citation type="journal article" date="2004" name="Genome Res.">
        <title>The status, quality, and expansion of the NIH full-length cDNA project: the Mammalian Gene Collection (MGC).</title>
        <authorList>
            <consortium name="The MGC Project Team"/>
        </authorList>
    </citation>
    <scope>NUCLEOTIDE SEQUENCE [LARGE SCALE MRNA] (ISOFORM 1)</scope>
    <source>
        <tissue>Skin</tissue>
        <tissue>Spinal ganglion</tissue>
    </source>
</reference>
<reference key="8">
    <citation type="journal article" date="2012" name="Proc. Natl. Acad. Sci. U.S.A.">
        <title>N-terminal acetylome analyses and functional insights of the N-terminal acetyltransferase NatB.</title>
        <authorList>
            <person name="Van Damme P."/>
            <person name="Lasa M."/>
            <person name="Polevoda B."/>
            <person name="Gazquez C."/>
            <person name="Elosegui-Artola A."/>
            <person name="Kim D.S."/>
            <person name="De Juan-Pardo E."/>
            <person name="Demeyer K."/>
            <person name="Hole K."/>
            <person name="Larrea E."/>
            <person name="Timmerman E."/>
            <person name="Prieto J."/>
            <person name="Arnesen T."/>
            <person name="Sherman F."/>
            <person name="Gevaert K."/>
            <person name="Aldabe R."/>
        </authorList>
    </citation>
    <scope>ACETYLATION [LARGE SCALE ANALYSIS] AT SER-2</scope>
    <scope>CLEAVAGE OF INITIATOR METHIONINE [LARGE SCALE ANALYSIS]</scope>
    <scope>IDENTIFICATION BY MASS SPECTROMETRY [LARGE SCALE ANALYSIS]</scope>
</reference>
<dbReference type="EMBL" id="AF391153">
    <property type="protein sequence ID" value="AAM46624.1"/>
    <property type="status" value="ALT_INIT"/>
    <property type="molecule type" value="mRNA"/>
</dbReference>
<dbReference type="EMBL" id="AF161505">
    <property type="protein sequence ID" value="AAF29120.1"/>
    <property type="molecule type" value="mRNA"/>
</dbReference>
<dbReference type="EMBL" id="AK096957">
    <property type="protein sequence ID" value="BAC04911.1"/>
    <property type="molecule type" value="mRNA"/>
</dbReference>
<dbReference type="EMBL" id="AL834346">
    <property type="protein sequence ID" value="CAD39012.2"/>
    <property type="molecule type" value="mRNA"/>
</dbReference>
<dbReference type="EMBL" id="AL137164">
    <property type="status" value="NOT_ANNOTATED_CDS"/>
    <property type="molecule type" value="Genomic_DNA"/>
</dbReference>
<dbReference type="EMBL" id="AL161663">
    <property type="status" value="NOT_ANNOTATED_CDS"/>
    <property type="molecule type" value="Genomic_DNA"/>
</dbReference>
<dbReference type="EMBL" id="CH471078">
    <property type="protein sequence ID" value="EAW65996.1"/>
    <property type="molecule type" value="Genomic_DNA"/>
</dbReference>
<dbReference type="EMBL" id="CH471078">
    <property type="protein sequence ID" value="EAW65999.1"/>
    <property type="molecule type" value="Genomic_DNA"/>
</dbReference>
<dbReference type="EMBL" id="CH471078">
    <property type="protein sequence ID" value="EAW66000.1"/>
    <property type="molecule type" value="Genomic_DNA"/>
</dbReference>
<dbReference type="EMBL" id="CH471078">
    <property type="protein sequence ID" value="EAW66001.1"/>
    <property type="molecule type" value="Genomic_DNA"/>
</dbReference>
<dbReference type="EMBL" id="BC009499">
    <property type="protein sequence ID" value="AAH09499.1"/>
    <property type="molecule type" value="mRNA"/>
</dbReference>
<dbReference type="EMBL" id="BC067278">
    <property type="protein sequence ID" value="AAH67278.1"/>
    <property type="molecule type" value="mRNA"/>
</dbReference>
<dbReference type="CCDS" id="CCDS9634.1">
    <molecule id="Q8NFX7-1"/>
</dbReference>
<dbReference type="RefSeq" id="NP_001291405.1">
    <molecule id="Q8NFX7-1"/>
    <property type="nucleotide sequence ID" value="NM_001304476.3"/>
</dbReference>
<dbReference type="RefSeq" id="NP_001291406.1">
    <molecule id="Q8NFX7-1"/>
    <property type="nucleotide sequence ID" value="NM_001304477.3"/>
</dbReference>
<dbReference type="RefSeq" id="NP_001338869.2">
    <molecule id="Q8NFX7-1"/>
    <property type="nucleotide sequence ID" value="NM_001351940.3"/>
</dbReference>
<dbReference type="RefSeq" id="NP_001338870.1">
    <molecule id="Q8NFX7-1"/>
    <property type="nucleotide sequence ID" value="NM_001351941.3"/>
</dbReference>
<dbReference type="RefSeq" id="NP_001338871.1">
    <molecule id="Q8NFX7-1"/>
    <property type="nucleotide sequence ID" value="NM_001351942.3"/>
</dbReference>
<dbReference type="RefSeq" id="NP_001338872.1">
    <molecule id="Q8NFX7-1"/>
    <property type="nucleotide sequence ID" value="NM_001351943.3"/>
</dbReference>
<dbReference type="RefSeq" id="NP_001381339.1">
    <molecule id="Q8NFX7-1"/>
    <property type="nucleotide sequence ID" value="NM_001394410.1"/>
</dbReference>
<dbReference type="RefSeq" id="NP_001381340.1">
    <molecule id="Q8NFX7-1"/>
    <property type="nucleotide sequence ID" value="NM_001394411.1"/>
</dbReference>
<dbReference type="RefSeq" id="NP_001381341.1">
    <molecule id="Q8NFX7-1"/>
    <property type="nucleotide sequence ID" value="NM_001394412.1"/>
</dbReference>
<dbReference type="RefSeq" id="NP_001381342.1">
    <molecule id="Q8NFX7-1"/>
    <property type="nucleotide sequence ID" value="NM_001394413.1"/>
</dbReference>
<dbReference type="RefSeq" id="NP_001381343.1">
    <molecule id="Q8NFX7-1"/>
    <property type="nucleotide sequence ID" value="NM_001394414.1"/>
</dbReference>
<dbReference type="RefSeq" id="NP_001381344.1">
    <molecule id="Q8NFX7-1"/>
    <property type="nucleotide sequence ID" value="NM_001394415.1"/>
</dbReference>
<dbReference type="RefSeq" id="NP_001381345.1">
    <molecule id="Q8NFX7-1"/>
    <property type="nucleotide sequence ID" value="NM_001394416.1"/>
</dbReference>
<dbReference type="RefSeq" id="NP_054897.4">
    <molecule id="Q8NFX7-1"/>
    <property type="nucleotide sequence ID" value="NM_014178.7"/>
</dbReference>
<dbReference type="RefSeq" id="XP_016876720.1">
    <property type="nucleotide sequence ID" value="XM_017021231.1"/>
</dbReference>
<dbReference type="RefSeq" id="XP_016876721.1">
    <property type="nucleotide sequence ID" value="XM_017021232.1"/>
</dbReference>
<dbReference type="RefSeq" id="XP_016876722.1">
    <property type="nucleotide sequence ID" value="XM_017021233.1"/>
</dbReference>
<dbReference type="RefSeq" id="XP_016876723.1">
    <property type="nucleotide sequence ID" value="XM_017021234.1"/>
</dbReference>
<dbReference type="RefSeq" id="XP_016876724.1">
    <property type="nucleotide sequence ID" value="XM_017021235.1"/>
</dbReference>
<dbReference type="RefSeq" id="XP_016876725.1">
    <property type="nucleotide sequence ID" value="XM_017021236.1"/>
</dbReference>
<dbReference type="RefSeq" id="XP_016876726.1">
    <property type="nucleotide sequence ID" value="XM_017021237.1"/>
</dbReference>
<dbReference type="RefSeq" id="XP_016876727.1">
    <property type="nucleotide sequence ID" value="XM_017021238.1"/>
</dbReference>
<dbReference type="RefSeq" id="XP_016876728.1">
    <property type="nucleotide sequence ID" value="XM_017021239.1"/>
</dbReference>
<dbReference type="RefSeq" id="XP_016876729.1">
    <property type="nucleotide sequence ID" value="XM_017021240.1"/>
</dbReference>
<dbReference type="RefSeq" id="XP_016876730.1">
    <molecule id="Q8NFX7-1"/>
    <property type="nucleotide sequence ID" value="XM_017021241.2"/>
</dbReference>
<dbReference type="RefSeq" id="XP_016876731.1">
    <property type="nucleotide sequence ID" value="XM_017021242.1"/>
</dbReference>
<dbReference type="RefSeq" id="XP_024305315.1">
    <molecule id="Q8NFX7-1"/>
    <property type="nucleotide sequence ID" value="XM_024449547.2"/>
</dbReference>
<dbReference type="RefSeq" id="XP_047287250.1">
    <molecule id="Q8NFX7-1"/>
    <property type="nucleotide sequence ID" value="XM_047431294.1"/>
</dbReference>
<dbReference type="RefSeq" id="XP_047287251.1">
    <molecule id="Q8NFX7-1"/>
    <property type="nucleotide sequence ID" value="XM_047431295.1"/>
</dbReference>
<dbReference type="RefSeq" id="XP_047287252.1">
    <molecule id="Q8NFX7-1"/>
    <property type="nucleotide sequence ID" value="XM_047431296.1"/>
</dbReference>
<dbReference type="RefSeq" id="XP_047287254.1">
    <molecule id="Q8NFX7-1"/>
    <property type="nucleotide sequence ID" value="XM_047431298.1"/>
</dbReference>
<dbReference type="RefSeq" id="XP_054231871.1">
    <molecule id="Q8NFX7-1"/>
    <property type="nucleotide sequence ID" value="XM_054375896.1"/>
</dbReference>
<dbReference type="RefSeq" id="XP_054231872.1">
    <molecule id="Q8NFX7-1"/>
    <property type="nucleotide sequence ID" value="XM_054375897.1"/>
</dbReference>
<dbReference type="RefSeq" id="XP_054231873.1">
    <molecule id="Q8NFX7-1"/>
    <property type="nucleotide sequence ID" value="XM_054375898.1"/>
</dbReference>
<dbReference type="RefSeq" id="XP_054231874.1">
    <molecule id="Q8NFX7-1"/>
    <property type="nucleotide sequence ID" value="XM_054375899.1"/>
</dbReference>
<dbReference type="RefSeq" id="XP_054231875.1">
    <molecule id="Q8NFX7-1"/>
    <property type="nucleotide sequence ID" value="XM_054375900.1"/>
</dbReference>
<dbReference type="RefSeq" id="XP_054231876.1">
    <molecule id="Q8NFX7-1"/>
    <property type="nucleotide sequence ID" value="XM_054375901.1"/>
</dbReference>
<dbReference type="SMR" id="Q8NFX7"/>
<dbReference type="BioGRID" id="118860">
    <property type="interactions" value="23"/>
</dbReference>
<dbReference type="FunCoup" id="Q8NFX7">
    <property type="interactions" value="67"/>
</dbReference>
<dbReference type="IntAct" id="Q8NFX7">
    <property type="interactions" value="21"/>
</dbReference>
<dbReference type="MINT" id="Q8NFX7"/>
<dbReference type="STRING" id="9606.ENSP00000324302"/>
<dbReference type="GlyCosmos" id="Q8NFX7">
    <property type="glycosylation" value="1 site, 1 glycan"/>
</dbReference>
<dbReference type="GlyGen" id="Q8NFX7">
    <property type="glycosylation" value="1 site, 1 O-linked glycan (1 site)"/>
</dbReference>
<dbReference type="iPTMnet" id="Q8NFX7"/>
<dbReference type="PhosphoSitePlus" id="Q8NFX7"/>
<dbReference type="SwissPalm" id="Q8NFX7"/>
<dbReference type="BioMuta" id="STXBP6"/>
<dbReference type="DMDM" id="34222907"/>
<dbReference type="jPOST" id="Q8NFX7"/>
<dbReference type="MassIVE" id="Q8NFX7"/>
<dbReference type="PaxDb" id="9606-ENSP00000324302"/>
<dbReference type="PeptideAtlas" id="Q8NFX7"/>
<dbReference type="ProteomicsDB" id="73382">
    <molecule id="Q8NFX7-1"/>
</dbReference>
<dbReference type="ProteomicsDB" id="73383">
    <molecule id="Q8NFX7-2"/>
</dbReference>
<dbReference type="ProteomicsDB" id="73384">
    <molecule id="Q8NFX7-3"/>
</dbReference>
<dbReference type="Pumba" id="Q8NFX7"/>
<dbReference type="Antibodypedia" id="22939">
    <property type="antibodies" value="213 antibodies from 29 providers"/>
</dbReference>
<dbReference type="DNASU" id="29091"/>
<dbReference type="Ensembl" id="ENST00000323944.10">
    <molecule id="Q8NFX7-1"/>
    <property type="protein sequence ID" value="ENSP00000324302.5"/>
    <property type="gene ID" value="ENSG00000168952.16"/>
</dbReference>
<dbReference type="Ensembl" id="ENST00000396700.5">
    <molecule id="Q8NFX7-1"/>
    <property type="protein sequence ID" value="ENSP00000379928.1"/>
    <property type="gene ID" value="ENSG00000168952.16"/>
</dbReference>
<dbReference type="Ensembl" id="ENST00000419632.6">
    <molecule id="Q8NFX7-1"/>
    <property type="protein sequence ID" value="ENSP00000397212.2"/>
    <property type="gene ID" value="ENSG00000168952.16"/>
</dbReference>
<dbReference type="Ensembl" id="ENST00000546511.5">
    <molecule id="Q8NFX7-1"/>
    <property type="protein sequence ID" value="ENSP00000449536.1"/>
    <property type="gene ID" value="ENSG00000168952.16"/>
</dbReference>
<dbReference type="Ensembl" id="ENST00000548369.1">
    <molecule id="Q8NFX7-3"/>
    <property type="protein sequence ID" value="ENSP00000447655.1"/>
    <property type="gene ID" value="ENSG00000168952.16"/>
</dbReference>
<dbReference type="Ensembl" id="ENST00000550887.5">
    <molecule id="Q8NFX7-1"/>
    <property type="protein sequence ID" value="ENSP00000449379.1"/>
    <property type="gene ID" value="ENSG00000168952.16"/>
</dbReference>
<dbReference type="GeneID" id="29091"/>
<dbReference type="KEGG" id="hsa:29091"/>
<dbReference type="MANE-Select" id="ENST00000323944.10">
    <property type="protein sequence ID" value="ENSP00000324302.5"/>
    <property type="RefSeq nucleotide sequence ID" value="NM_001394410.1"/>
    <property type="RefSeq protein sequence ID" value="NP_001381339.1"/>
</dbReference>
<dbReference type="UCSC" id="uc001wpt.5">
    <molecule id="Q8NFX7-1"/>
    <property type="organism name" value="human"/>
</dbReference>
<dbReference type="AGR" id="HGNC:19666"/>
<dbReference type="CTD" id="29091"/>
<dbReference type="DisGeNET" id="29091"/>
<dbReference type="GeneCards" id="STXBP6"/>
<dbReference type="HGNC" id="HGNC:19666">
    <property type="gene designation" value="STXBP6"/>
</dbReference>
<dbReference type="HPA" id="ENSG00000168952">
    <property type="expression patterns" value="Low tissue specificity"/>
</dbReference>
<dbReference type="MIM" id="607958">
    <property type="type" value="gene"/>
</dbReference>
<dbReference type="neXtProt" id="NX_Q8NFX7"/>
<dbReference type="OpenTargets" id="ENSG00000168952"/>
<dbReference type="PharmGKB" id="PA134985567"/>
<dbReference type="VEuPathDB" id="HostDB:ENSG00000168952"/>
<dbReference type="eggNOG" id="KOG1983">
    <property type="taxonomic scope" value="Eukaryota"/>
</dbReference>
<dbReference type="GeneTree" id="ENSGT00940000156499"/>
<dbReference type="HOGENOM" id="CLU_101413_0_0_1"/>
<dbReference type="InParanoid" id="Q8NFX7"/>
<dbReference type="OMA" id="TCQRYLP"/>
<dbReference type="OrthoDB" id="8931425at2759"/>
<dbReference type="PAN-GO" id="Q8NFX7">
    <property type="GO annotations" value="5 GO annotations based on evolutionary models"/>
</dbReference>
<dbReference type="PhylomeDB" id="Q8NFX7"/>
<dbReference type="PathwayCommons" id="Q8NFX7"/>
<dbReference type="SignaLink" id="Q8NFX7"/>
<dbReference type="BioGRID-ORCS" id="29091">
    <property type="hits" value="6 hits in 1153 CRISPR screens"/>
</dbReference>
<dbReference type="ChiTaRS" id="STXBP6">
    <property type="organism name" value="human"/>
</dbReference>
<dbReference type="GenomeRNAi" id="29091"/>
<dbReference type="Pharos" id="Q8NFX7">
    <property type="development level" value="Tbio"/>
</dbReference>
<dbReference type="PRO" id="PR:Q8NFX7"/>
<dbReference type="Proteomes" id="UP000005640">
    <property type="component" value="Chromosome 14"/>
</dbReference>
<dbReference type="RNAct" id="Q8NFX7">
    <property type="molecule type" value="protein"/>
</dbReference>
<dbReference type="Bgee" id="ENSG00000168952">
    <property type="expression patterns" value="Expressed in lateral nuclear group of thalamus and 172 other cell types or tissues"/>
</dbReference>
<dbReference type="ExpressionAtlas" id="Q8NFX7">
    <property type="expression patterns" value="baseline and differential"/>
</dbReference>
<dbReference type="GO" id="GO:0005912">
    <property type="term" value="C:adherens junction"/>
    <property type="evidence" value="ECO:0007005"/>
    <property type="project" value="BHF-UCL"/>
</dbReference>
<dbReference type="GO" id="GO:0005737">
    <property type="term" value="C:cytoplasm"/>
    <property type="evidence" value="ECO:0007669"/>
    <property type="project" value="UniProtKB-SubCell"/>
</dbReference>
<dbReference type="GO" id="GO:0016020">
    <property type="term" value="C:membrane"/>
    <property type="evidence" value="ECO:0007669"/>
    <property type="project" value="UniProtKB-SubCell"/>
</dbReference>
<dbReference type="GO" id="GO:0098641">
    <property type="term" value="F:cadherin binding involved in cell-cell adhesion"/>
    <property type="evidence" value="ECO:0007005"/>
    <property type="project" value="BHF-UCL"/>
</dbReference>
<dbReference type="GO" id="GO:0045920">
    <property type="term" value="P:negative regulation of exocytosis"/>
    <property type="evidence" value="ECO:0000304"/>
    <property type="project" value="ParkinsonsUK-UCL"/>
</dbReference>
<dbReference type="GO" id="GO:0035542">
    <property type="term" value="P:regulation of SNARE complex assembly"/>
    <property type="evidence" value="ECO:0007669"/>
    <property type="project" value="InterPro"/>
</dbReference>
<dbReference type="GO" id="GO:0035493">
    <property type="term" value="P:SNARE complex assembly"/>
    <property type="evidence" value="ECO:0000314"/>
    <property type="project" value="ParkinsonsUK-UCL"/>
</dbReference>
<dbReference type="CDD" id="cd14681">
    <property type="entry name" value="PH-STXBP6"/>
    <property type="match status" value="1"/>
</dbReference>
<dbReference type="CDD" id="cd15892">
    <property type="entry name" value="R-SNARE_STXBP6"/>
    <property type="match status" value="1"/>
</dbReference>
<dbReference type="FunFam" id="1.20.5.110:FF:000029">
    <property type="entry name" value="Syntaxin-binding protein 6"/>
    <property type="match status" value="1"/>
</dbReference>
<dbReference type="FunFam" id="2.30.29.90:FF:000002">
    <property type="entry name" value="syntaxin-binding protein 6"/>
    <property type="match status" value="1"/>
</dbReference>
<dbReference type="Gene3D" id="1.20.5.110">
    <property type="match status" value="1"/>
</dbReference>
<dbReference type="Gene3D" id="2.30.29.90">
    <property type="match status" value="1"/>
</dbReference>
<dbReference type="InterPro" id="IPR028258">
    <property type="entry name" value="Sec3-PIP2_bind"/>
</dbReference>
<dbReference type="InterPro" id="IPR037821">
    <property type="entry name" value="STXBP6_PH"/>
</dbReference>
<dbReference type="InterPro" id="IPR037822">
    <property type="entry name" value="STXBP6_SNARE"/>
</dbReference>
<dbReference type="InterPro" id="IPR042855">
    <property type="entry name" value="V_SNARE_CC"/>
</dbReference>
<dbReference type="PANTHER" id="PTHR16092:SF14">
    <property type="entry name" value="EXOCYST COMPLEX COMPONENT 1 ISOFORM X1"/>
    <property type="match status" value="1"/>
</dbReference>
<dbReference type="PANTHER" id="PTHR16092">
    <property type="entry name" value="SEC3/SYNTAXIN-RELATED"/>
    <property type="match status" value="1"/>
</dbReference>
<dbReference type="Pfam" id="PF15277">
    <property type="entry name" value="Sec3-PIP2_bind"/>
    <property type="match status" value="1"/>
</dbReference>
<dbReference type="Pfam" id="PF00957">
    <property type="entry name" value="Synaptobrevin"/>
    <property type="match status" value="1"/>
</dbReference>
<dbReference type="SMART" id="SM01313">
    <property type="entry name" value="Sec3-PIP2_bind"/>
    <property type="match status" value="1"/>
</dbReference>
<dbReference type="SUPFAM" id="SSF58038">
    <property type="entry name" value="SNARE fusion complex"/>
    <property type="match status" value="1"/>
</dbReference>
<dbReference type="PROSITE" id="PS50892">
    <property type="entry name" value="V_SNARE"/>
    <property type="match status" value="1"/>
</dbReference>
<proteinExistence type="evidence at protein level"/>
<sequence length="210" mass="23554">MSAKSAISKEIFAPLDERMLGAVQVKRRTKKKIPFLATGGQGEYLTYICLSVTNKKPTQASITKVKQFEGSTSFVRRSQWMLEQLRQVNGIDPNGDSAEFDLLFENAFDQWVASTASEKCTFFQILHHTCQRYLTDRKPEFINCQSKIMGGNSILHSAADSVTSAVQKASQALNERGERLGRAEEKTEDLKNSAQQFAETAHKLAMKHKC</sequence>
<evidence type="ECO:0000255" key="1">
    <source>
        <dbReference type="PROSITE-ProRule" id="PRU00290"/>
    </source>
</evidence>
<evidence type="ECO:0000269" key="2">
    <source>
    </source>
</evidence>
<evidence type="ECO:0000303" key="3">
    <source>
    </source>
</evidence>
<evidence type="ECO:0000303" key="4">
    <source>
    </source>
</evidence>
<evidence type="ECO:0000305" key="5"/>
<evidence type="ECO:0007744" key="6">
    <source>
    </source>
</evidence>